<name>VL1_HPV56</name>
<reference key="1">
    <citation type="journal article" date="1994" name="Curr. Top. Microbiol. Immunol.">
        <title>Primer-directed sequencing of human papillomavirus types.</title>
        <authorList>
            <person name="Delius H."/>
            <person name="Hofmann B."/>
        </authorList>
    </citation>
    <scope>NUCLEOTIDE SEQUENCE [GENOMIC DNA]</scope>
</reference>
<reference key="2">
    <citation type="journal article" date="1992" name="J. Clin. Microbiol.">
        <title>General primer polymerase chain reaction in combination with sequence analysis for identification of potentially novel human papillomavirus genotypes in cervical lesions.</title>
        <authorList>
            <person name="van den Brule A.J."/>
            <person name="Snijders P.J."/>
            <person name="Raaphorst P.M."/>
            <person name="Schrijnemakers H.F."/>
            <person name="Delius H."/>
            <person name="Gissmann L."/>
            <person name="Meijer C.J."/>
            <person name="Walboomers J.M."/>
        </authorList>
    </citation>
    <scope>NUCLEOTIDE SEQUENCE [GENOMIC DNA] OF 371-402</scope>
</reference>
<keyword id="KW-0167">Capsid protein</keyword>
<keyword id="KW-1015">Disulfide bond</keyword>
<keyword id="KW-1048">Host nucleus</keyword>
<keyword id="KW-0945">Host-virus interaction</keyword>
<keyword id="KW-0426">Late protein</keyword>
<keyword id="KW-1185">Reference proteome</keyword>
<keyword id="KW-1145">T=7 icosahedral capsid protein</keyword>
<keyword id="KW-1161">Viral attachment to host cell</keyword>
<keyword id="KW-1162">Viral penetration into host cytoplasm</keyword>
<keyword id="KW-0946">Virion</keyword>
<keyword id="KW-1164">Virus endocytosis by host</keyword>
<keyword id="KW-1160">Virus entry into host cell</keyword>
<sequence length="534" mass="60161">MMLPMMYIYRDPPLHYGLCIFLDVGAVNVFPIFLQMATWRPSENKVYLPPTPVSKVVATDSYVKRTSIFYHAGSSRLLAVGHPYYSVTKDNTKTNIPKVSAYQYRVFRVRLPDPNKFGLPDTNIYNPDQERLVWACVGLEVGRGQPLGAGLSGHPLFNRLDDTESSNLANNNVIEDSRDNISVDGKQTQLCIVGCTPAMGEHWTKGAVCKSTQVTTGDCPPLALINTPIEDGDMIDTGFGAMDFKVLQESKAEVPLDIVQSTCKYPDYLKMSADAYGDSMWFYLRREQLFARHYFNRAGKVGETIPAELYLKGSNGREPPPSSVYVATPSGSMITSEAQLFNKPYWLQRAQGHNNGICWGNQLFVTVVDTTRSTNMTISTATEQLSKYDARKINQYLRHVEEYELQFVFQLCKITLSAEVMAYLHNMNANLLEDWNIGLSPPVATSLEDKYRYVRSTAITCQREQPPTEKQDPLAKYKFWDVNLQDSFSTDLDQFPLGRKFLMQLGTRSKPAVATSKKRSAPTSTSTPAKRKRR</sequence>
<organismHost>
    <name type="scientific">Homo sapiens</name>
    <name type="common">Human</name>
    <dbReference type="NCBI Taxonomy" id="9606"/>
</organismHost>
<dbReference type="EMBL" id="X74483">
    <property type="protein sequence ID" value="CAA52600.1"/>
    <property type="molecule type" value="Genomic_DNA"/>
</dbReference>
<dbReference type="EMBL" id="S40273">
    <property type="protein sequence ID" value="AAB22569.1"/>
    <property type="molecule type" value="Genomic_DNA"/>
</dbReference>
<dbReference type="PIR" id="S36583">
    <property type="entry name" value="S36583"/>
</dbReference>
<dbReference type="SMR" id="P36743"/>
<dbReference type="Proteomes" id="UP000007666">
    <property type="component" value="Segment"/>
</dbReference>
<dbReference type="GO" id="GO:0042025">
    <property type="term" value="C:host cell nucleus"/>
    <property type="evidence" value="ECO:0007669"/>
    <property type="project" value="UniProtKB-SubCell"/>
</dbReference>
<dbReference type="GO" id="GO:0039620">
    <property type="term" value="C:T=7 icosahedral viral capsid"/>
    <property type="evidence" value="ECO:0007669"/>
    <property type="project" value="UniProtKB-UniRule"/>
</dbReference>
<dbReference type="GO" id="GO:0005198">
    <property type="term" value="F:structural molecule activity"/>
    <property type="evidence" value="ECO:0007669"/>
    <property type="project" value="UniProtKB-UniRule"/>
</dbReference>
<dbReference type="GO" id="GO:0075509">
    <property type="term" value="P:endocytosis involved in viral entry into host cell"/>
    <property type="evidence" value="ECO:0007669"/>
    <property type="project" value="UniProtKB-KW"/>
</dbReference>
<dbReference type="GO" id="GO:0019062">
    <property type="term" value="P:virion attachment to host cell"/>
    <property type="evidence" value="ECO:0007669"/>
    <property type="project" value="UniProtKB-UniRule"/>
</dbReference>
<dbReference type="Gene3D" id="2.60.175.20">
    <property type="entry name" value="Major capsid L1 (late) superfamily, Papillomavirus"/>
    <property type="match status" value="2"/>
</dbReference>
<dbReference type="HAMAP" id="MF_04002">
    <property type="entry name" value="PPV_L1"/>
    <property type="match status" value="1"/>
</dbReference>
<dbReference type="InterPro" id="IPR002210">
    <property type="entry name" value="Capsid_L1_Papillomavir"/>
</dbReference>
<dbReference type="InterPro" id="IPR036973">
    <property type="entry name" value="Capsid_L1_sf_Papillomavir"/>
</dbReference>
<dbReference type="InterPro" id="IPR011222">
    <property type="entry name" value="dsDNA_vir_gr_I_capsid"/>
</dbReference>
<dbReference type="Pfam" id="PF00500">
    <property type="entry name" value="Late_protein_L1"/>
    <property type="match status" value="1"/>
</dbReference>
<dbReference type="PRINTS" id="PR00865">
    <property type="entry name" value="HPVCAPSIDL1"/>
</dbReference>
<dbReference type="SUPFAM" id="SSF88648">
    <property type="entry name" value="Group I dsDNA viruses"/>
    <property type="match status" value="1"/>
</dbReference>
<accession>P36743</accession>
<accession>Q90082</accession>
<protein>
    <recommendedName>
        <fullName evidence="1">Major capsid protein L1</fullName>
    </recommendedName>
</protein>
<gene>
    <name evidence="1" type="primary">L1</name>
</gene>
<organism>
    <name type="scientific">Human papillomavirus 56</name>
    <dbReference type="NCBI Taxonomy" id="10596"/>
    <lineage>
        <taxon>Viruses</taxon>
        <taxon>Monodnaviria</taxon>
        <taxon>Shotokuvirae</taxon>
        <taxon>Cossaviricota</taxon>
        <taxon>Papovaviricetes</taxon>
        <taxon>Zurhausenvirales</taxon>
        <taxon>Papillomaviridae</taxon>
        <taxon>Firstpapillomavirinae</taxon>
        <taxon>Alphapapillomavirus</taxon>
        <taxon>Alphapapillomavirus 6</taxon>
    </lineage>
</organism>
<evidence type="ECO:0000255" key="1">
    <source>
        <dbReference type="HAMAP-Rule" id="MF_04002"/>
    </source>
</evidence>
<evidence type="ECO:0000256" key="2">
    <source>
        <dbReference type="SAM" id="MobiDB-lite"/>
    </source>
</evidence>
<comment type="function">
    <text evidence="1">Forms an icosahedral capsid with a T=7 symmetry and a 50 nm diameter. The capsid is composed of 72 pentamers linked to each other by disulfide bonds and associated with L2 proteins. Binds to heparan sulfate proteoglycans on cell surface of basal layer keratinocytes to provide initial virion attachment. This binding mediates a conformational change in the virus capsid that facilitates efficient infection. The virion enters the host cell via endocytosis. During virus trafficking, L1 protein dissociates from the viral DNA and the genomic DNA is released to the host nucleus. The virion assembly takes place within the cell nucleus. Encapsulates the genomic DNA together with protein L2.</text>
</comment>
<comment type="subunit">
    <text evidence="1">Self-assembles into homopentamers. The capsid has an icosahedral symmetry and consists of 72 capsomers, with each capsomer being a pentamer of L1. Interacts with the minor capsid protein L2; this interaction is necessary for viral genome encapsidation. Interacts with protein E2; this interaction enhances E2-dependent replication and transcription activation.</text>
</comment>
<comment type="subcellular location">
    <subcellularLocation>
        <location evidence="1">Virion</location>
    </subcellularLocation>
    <subcellularLocation>
        <location evidence="1">Host nucleus</location>
    </subcellularLocation>
</comment>
<comment type="similarity">
    <text evidence="1">Belongs to the papillomaviridae L1 protein family.</text>
</comment>
<proteinExistence type="inferred from homology"/>
<feature type="chain" id="PRO_0000133539" description="Major capsid protein L1">
    <location>
        <begin position="1"/>
        <end position="534"/>
    </location>
</feature>
<feature type="region of interest" description="Disordered" evidence="2">
    <location>
        <begin position="508"/>
        <end position="534"/>
    </location>
</feature>
<feature type="disulfide bond" description="Interchain (with C-461)" evidence="1">
    <location>
        <position position="209"/>
    </location>
</feature>
<feature type="disulfide bond" description="Interchain (with C-209)" evidence="1">
    <location>
        <position position="461"/>
    </location>
</feature>